<reference key="1">
    <citation type="journal article" date="2002" name="Syst. Biol.">
        <title>Phylogenetic relationships in the genus mus, based on paternally, maternally, and biparentally inherited characters.</title>
        <authorList>
            <person name="Lundrigan B.L."/>
            <person name="Jansa S.A."/>
            <person name="Tucker P.K."/>
        </authorList>
    </citation>
    <scope>NUCLEOTIDE SEQUENCE [GENOMIC DNA]</scope>
</reference>
<gene>
    <name type="primary">MT-CYB</name>
    <name type="synonym">COB</name>
    <name type="synonym">CYTB</name>
    <name type="synonym">MTCYB</name>
</gene>
<feature type="chain" id="PRO_0000061051" description="Cytochrome b">
    <location>
        <begin position="1"/>
        <end position="380"/>
    </location>
</feature>
<feature type="transmembrane region" description="Helical" evidence="2">
    <location>
        <begin position="33"/>
        <end position="53"/>
    </location>
</feature>
<feature type="transmembrane region" description="Helical" evidence="2">
    <location>
        <begin position="77"/>
        <end position="98"/>
    </location>
</feature>
<feature type="transmembrane region" description="Helical" evidence="2">
    <location>
        <begin position="113"/>
        <end position="133"/>
    </location>
</feature>
<feature type="transmembrane region" description="Helical" evidence="2">
    <location>
        <begin position="178"/>
        <end position="198"/>
    </location>
</feature>
<feature type="transmembrane region" description="Helical" evidence="2">
    <location>
        <begin position="226"/>
        <end position="246"/>
    </location>
</feature>
<feature type="transmembrane region" description="Helical" evidence="2">
    <location>
        <begin position="288"/>
        <end position="308"/>
    </location>
</feature>
<feature type="transmembrane region" description="Helical" evidence="2">
    <location>
        <begin position="320"/>
        <end position="340"/>
    </location>
</feature>
<feature type="transmembrane region" description="Helical" evidence="2">
    <location>
        <begin position="347"/>
        <end position="367"/>
    </location>
</feature>
<feature type="binding site" description="axial binding residue" evidence="2">
    <location>
        <position position="83"/>
    </location>
    <ligand>
        <name>heme b</name>
        <dbReference type="ChEBI" id="CHEBI:60344"/>
        <label>b562</label>
    </ligand>
    <ligandPart>
        <name>Fe</name>
        <dbReference type="ChEBI" id="CHEBI:18248"/>
    </ligandPart>
</feature>
<feature type="binding site" description="axial binding residue" evidence="2">
    <location>
        <position position="97"/>
    </location>
    <ligand>
        <name>heme b</name>
        <dbReference type="ChEBI" id="CHEBI:60344"/>
        <label>b566</label>
    </ligand>
    <ligandPart>
        <name>Fe</name>
        <dbReference type="ChEBI" id="CHEBI:18248"/>
    </ligandPart>
</feature>
<feature type="binding site" description="axial binding residue" evidence="2">
    <location>
        <position position="182"/>
    </location>
    <ligand>
        <name>heme b</name>
        <dbReference type="ChEBI" id="CHEBI:60344"/>
        <label>b562</label>
    </ligand>
    <ligandPart>
        <name>Fe</name>
        <dbReference type="ChEBI" id="CHEBI:18248"/>
    </ligandPart>
</feature>
<feature type="binding site" description="axial binding residue" evidence="2">
    <location>
        <position position="196"/>
    </location>
    <ligand>
        <name>heme b</name>
        <dbReference type="ChEBI" id="CHEBI:60344"/>
        <label>b566</label>
    </ligand>
    <ligandPart>
        <name>Fe</name>
        <dbReference type="ChEBI" id="CHEBI:18248"/>
    </ligandPart>
</feature>
<feature type="binding site" evidence="2">
    <location>
        <position position="201"/>
    </location>
    <ligand>
        <name>a ubiquinone</name>
        <dbReference type="ChEBI" id="CHEBI:16389"/>
    </ligand>
</feature>
<sequence length="380" mass="43102">MTNIRKTHPLFKIINHSFIDLPAPSNISSWWNFGSLLGICLMIQIITGLFLAMHYTSDTMTAFSSVTHICRDVNYGWLIRYLHANGASMFFICLFLHVGRGMYYGSYTFMETWNIGVILLFAVMATAFMGYVLPWGQMSFWGATVITNLLSAIPYIGTTLVEWIWGGFSVDKATLTRFFAFHFILPFIITALVIVHLLFLHETGSNNPTGLNSDSDKIPFHPYYTIKDILGVILMIMFLMTLVLFFPDLLGDPDNYTPANPLNTPPHIKPEWYFLFAYAILRSIPNKLGGVLALILSIMVLMLLPFLHTSKLRSLMFRPITQTLYWILVANLLVLTWIGGQPVEHPFIIIGQLASISYFSIILIFMPIAGIIEDSLLKFD</sequence>
<organism>
    <name type="scientific">Hylomyscus alleni</name>
    <name type="common">Allen's wood mouse</name>
    <dbReference type="NCBI Taxonomy" id="34858"/>
    <lineage>
        <taxon>Eukaryota</taxon>
        <taxon>Metazoa</taxon>
        <taxon>Chordata</taxon>
        <taxon>Craniata</taxon>
        <taxon>Vertebrata</taxon>
        <taxon>Euteleostomi</taxon>
        <taxon>Mammalia</taxon>
        <taxon>Eutheria</taxon>
        <taxon>Euarchontoglires</taxon>
        <taxon>Glires</taxon>
        <taxon>Rodentia</taxon>
        <taxon>Myomorpha</taxon>
        <taxon>Muroidea</taxon>
        <taxon>Muridae</taxon>
        <taxon>Murinae</taxon>
        <taxon>Hylomyscus</taxon>
    </lineage>
</organism>
<geneLocation type="mitochondrion"/>
<dbReference type="EMBL" id="AY057817">
    <property type="protein sequence ID" value="AAL23827.1"/>
    <property type="molecule type" value="Genomic_DNA"/>
</dbReference>
<dbReference type="SMR" id="Q8WA39"/>
<dbReference type="GO" id="GO:0005743">
    <property type="term" value="C:mitochondrial inner membrane"/>
    <property type="evidence" value="ECO:0007669"/>
    <property type="project" value="UniProtKB-SubCell"/>
</dbReference>
<dbReference type="GO" id="GO:0045275">
    <property type="term" value="C:respiratory chain complex III"/>
    <property type="evidence" value="ECO:0007669"/>
    <property type="project" value="InterPro"/>
</dbReference>
<dbReference type="GO" id="GO:0046872">
    <property type="term" value="F:metal ion binding"/>
    <property type="evidence" value="ECO:0007669"/>
    <property type="project" value="UniProtKB-KW"/>
</dbReference>
<dbReference type="GO" id="GO:0008121">
    <property type="term" value="F:ubiquinol-cytochrome-c reductase activity"/>
    <property type="evidence" value="ECO:0007669"/>
    <property type="project" value="InterPro"/>
</dbReference>
<dbReference type="GO" id="GO:0006122">
    <property type="term" value="P:mitochondrial electron transport, ubiquinol to cytochrome c"/>
    <property type="evidence" value="ECO:0007669"/>
    <property type="project" value="TreeGrafter"/>
</dbReference>
<dbReference type="CDD" id="cd00290">
    <property type="entry name" value="cytochrome_b_C"/>
    <property type="match status" value="1"/>
</dbReference>
<dbReference type="CDD" id="cd00284">
    <property type="entry name" value="Cytochrome_b_N"/>
    <property type="match status" value="1"/>
</dbReference>
<dbReference type="FunFam" id="1.20.810.10:FF:000002">
    <property type="entry name" value="Cytochrome b"/>
    <property type="match status" value="1"/>
</dbReference>
<dbReference type="Gene3D" id="1.20.810.10">
    <property type="entry name" value="Cytochrome Bc1 Complex, Chain C"/>
    <property type="match status" value="1"/>
</dbReference>
<dbReference type="InterPro" id="IPR005798">
    <property type="entry name" value="Cyt_b/b6_C"/>
</dbReference>
<dbReference type="InterPro" id="IPR036150">
    <property type="entry name" value="Cyt_b/b6_C_sf"/>
</dbReference>
<dbReference type="InterPro" id="IPR005797">
    <property type="entry name" value="Cyt_b/b6_N"/>
</dbReference>
<dbReference type="InterPro" id="IPR027387">
    <property type="entry name" value="Cytb/b6-like_sf"/>
</dbReference>
<dbReference type="InterPro" id="IPR030689">
    <property type="entry name" value="Cytochrome_b"/>
</dbReference>
<dbReference type="InterPro" id="IPR048260">
    <property type="entry name" value="Cytochrome_b_C_euk/bac"/>
</dbReference>
<dbReference type="InterPro" id="IPR048259">
    <property type="entry name" value="Cytochrome_b_N_euk/bac"/>
</dbReference>
<dbReference type="InterPro" id="IPR016174">
    <property type="entry name" value="Di-haem_cyt_TM"/>
</dbReference>
<dbReference type="PANTHER" id="PTHR19271">
    <property type="entry name" value="CYTOCHROME B"/>
    <property type="match status" value="1"/>
</dbReference>
<dbReference type="PANTHER" id="PTHR19271:SF16">
    <property type="entry name" value="CYTOCHROME B"/>
    <property type="match status" value="1"/>
</dbReference>
<dbReference type="Pfam" id="PF00032">
    <property type="entry name" value="Cytochrom_B_C"/>
    <property type="match status" value="1"/>
</dbReference>
<dbReference type="Pfam" id="PF00033">
    <property type="entry name" value="Cytochrome_B"/>
    <property type="match status" value="1"/>
</dbReference>
<dbReference type="PIRSF" id="PIRSF038885">
    <property type="entry name" value="COB"/>
    <property type="match status" value="1"/>
</dbReference>
<dbReference type="SUPFAM" id="SSF81648">
    <property type="entry name" value="a domain/subunit of cytochrome bc1 complex (Ubiquinol-cytochrome c reductase)"/>
    <property type="match status" value="1"/>
</dbReference>
<dbReference type="SUPFAM" id="SSF81342">
    <property type="entry name" value="Transmembrane di-heme cytochromes"/>
    <property type="match status" value="1"/>
</dbReference>
<dbReference type="PROSITE" id="PS51003">
    <property type="entry name" value="CYTB_CTER"/>
    <property type="match status" value="1"/>
</dbReference>
<dbReference type="PROSITE" id="PS51002">
    <property type="entry name" value="CYTB_NTER"/>
    <property type="match status" value="1"/>
</dbReference>
<comment type="function">
    <text evidence="2">Component of the ubiquinol-cytochrome c reductase complex (complex III or cytochrome b-c1 complex) that is part of the mitochondrial respiratory chain. The b-c1 complex mediates electron transfer from ubiquinol to cytochrome c. Contributes to the generation of a proton gradient across the mitochondrial membrane that is then used for ATP synthesis.</text>
</comment>
<comment type="cofactor">
    <cofactor evidence="2">
        <name>heme b</name>
        <dbReference type="ChEBI" id="CHEBI:60344"/>
    </cofactor>
    <text evidence="2">Binds 2 heme b groups non-covalently.</text>
</comment>
<comment type="subunit">
    <text evidence="2">The cytochrome bc1 complex contains 11 subunits: 3 respiratory subunits (MT-CYB, CYC1 and UQCRFS1), 2 core proteins (UQCRC1 and UQCRC2) and 6 low-molecular weight proteins (UQCRH/QCR6, UQCRB/QCR7, UQCRQ/QCR8, UQCR10/QCR9, UQCR11/QCR10 and a cleavage product of UQCRFS1). This cytochrome bc1 complex then forms a dimer.</text>
</comment>
<comment type="subcellular location">
    <subcellularLocation>
        <location evidence="2">Mitochondrion inner membrane</location>
        <topology evidence="2">Multi-pass membrane protein</topology>
    </subcellularLocation>
</comment>
<comment type="miscellaneous">
    <text evidence="1">Heme 1 (or BL or b562) is low-potential and absorbs at about 562 nm, and heme 2 (or BH or b566) is high-potential and absorbs at about 566 nm.</text>
</comment>
<comment type="similarity">
    <text evidence="3 4">Belongs to the cytochrome b family.</text>
</comment>
<comment type="caution">
    <text evidence="2">The full-length protein contains only eight transmembrane helices, not nine as predicted by bioinformatics tools.</text>
</comment>
<accession>Q8WA39</accession>
<keyword id="KW-0249">Electron transport</keyword>
<keyword id="KW-0349">Heme</keyword>
<keyword id="KW-0408">Iron</keyword>
<keyword id="KW-0472">Membrane</keyword>
<keyword id="KW-0479">Metal-binding</keyword>
<keyword id="KW-0496">Mitochondrion</keyword>
<keyword id="KW-0999">Mitochondrion inner membrane</keyword>
<keyword id="KW-0679">Respiratory chain</keyword>
<keyword id="KW-0812">Transmembrane</keyword>
<keyword id="KW-1133">Transmembrane helix</keyword>
<keyword id="KW-0813">Transport</keyword>
<keyword id="KW-0830">Ubiquinone</keyword>
<protein>
    <recommendedName>
        <fullName>Cytochrome b</fullName>
    </recommendedName>
    <alternativeName>
        <fullName>Complex III subunit 3</fullName>
    </alternativeName>
    <alternativeName>
        <fullName>Complex III subunit III</fullName>
    </alternativeName>
    <alternativeName>
        <fullName>Cytochrome b-c1 complex subunit 3</fullName>
    </alternativeName>
    <alternativeName>
        <fullName>Ubiquinol-cytochrome-c reductase complex cytochrome b subunit</fullName>
    </alternativeName>
</protein>
<proteinExistence type="inferred from homology"/>
<name>CYB_HYLAL</name>
<evidence type="ECO:0000250" key="1"/>
<evidence type="ECO:0000250" key="2">
    <source>
        <dbReference type="UniProtKB" id="P00157"/>
    </source>
</evidence>
<evidence type="ECO:0000255" key="3">
    <source>
        <dbReference type="PROSITE-ProRule" id="PRU00967"/>
    </source>
</evidence>
<evidence type="ECO:0000255" key="4">
    <source>
        <dbReference type="PROSITE-ProRule" id="PRU00968"/>
    </source>
</evidence>